<comment type="function">
    <text evidence="1">Component of the ERMES/MDM complex, which serves as a molecular tether to connect the endoplasmic reticulum (ER) and mitochondria. Components of this complex are involved in the control of mitochondrial shape and protein biogenesis, and function in nonvesicular lipid trafficking between the ER and mitochondria. The MDM12-MMM1 subcomplex functions in the major beta-barrel assembly pathway that is responsible for biogenesis of all outer membrane beta-barrel proteins, and acts in a late step after the SAM complex. The MDM10-MDM12-MMM1 subcomplex further acts in the TOM40-specific pathway after the action of the MDM12-MMM1 complex. Essential for establishing and maintaining the structure of mitochondria and maintenance of mtDNA nucleoids.</text>
</comment>
<comment type="subunit">
    <text evidence="1">Homodimer. Component of the ER-mitochondria encounter structure (ERMES) or MDM complex, composed of MMM1, MDM10, MDM12 and MDM34. A MMM1 homodimer associates with one molecule of MDM12 on each side in a pairwise head-to-tail manner, and the SMP-LTD domains of MMM1 and MDM12 generate a continuous hydrophobic tunnel for phospholipid trafficking.</text>
</comment>
<comment type="subcellular location">
    <subcellularLocation>
        <location evidence="1">Endoplasmic reticulum membrane</location>
        <topology evidence="1">Single-pass type I membrane protein</topology>
    </subcellularLocation>
    <text evidence="1">The ERMES/MDM complex localizes to a few discrete foci (around 10 per single cell), that represent mitochondria-endoplasmic reticulum junctions. These foci are often found next to mtDNA nucleoids.</text>
</comment>
<comment type="domain">
    <text evidence="1">The SMP-LTD domain is a barrel-like domain that can bind various types of glycerophospholipids in its interior and mediate their transfer between two adjacent bilayers.</text>
</comment>
<comment type="similarity">
    <text evidence="1">Belongs to the MMM1 family.</text>
</comment>
<feature type="chain" id="PRO_0000384250" description="Maintenance of mitochondrial morphology protein 1">
    <location>
        <begin position="1"/>
        <end position="309"/>
    </location>
</feature>
<feature type="topological domain" description="Lumenal" evidence="1">
    <location>
        <begin position="1"/>
        <end position="16"/>
    </location>
</feature>
<feature type="transmembrane region" description="Helical" evidence="1">
    <location>
        <begin position="17"/>
        <end position="37"/>
    </location>
</feature>
<feature type="topological domain" description="Cytoplasmic" evidence="1">
    <location>
        <begin position="38"/>
        <end position="309"/>
    </location>
</feature>
<feature type="domain" description="SMP-LTD" evidence="1">
    <location>
        <begin position="84"/>
        <end position="293"/>
    </location>
</feature>
<sequence length="309" mass="34213">MGNAYIFSLQPTFTQGLILGQFSILFLLVLVLKYLFFDTVSDHAYRTSSYQPKIERDEDEDGIALVAERLAPKPAQDGKQSGNECESADWLNALLIQVLEAYRVKLRDGLPGAEGDEVARKRVERFANQMRPPGFLDPIKVHSVDLGVTAPRLSRARPRPQKAPNTDPAIEFDMSYADTISLSLSTSVLFNYPFASFARLPVSLTISLSHFSSSVLLTPPQPHAQHPTVTLNLPSPGTDFVLNIQTKSLMGSRAKLADVPKLHEMITHQIQRVLLEKGTWKVVLPGLASVSEVKEDVKREQQAGELPVN</sequence>
<dbReference type="EMBL" id="EQ966442">
    <property type="protein sequence ID" value="EED78430.1"/>
    <property type="molecule type" value="Genomic_DNA"/>
</dbReference>
<dbReference type="RefSeq" id="XP_002476378.1">
    <property type="nucleotide sequence ID" value="XM_002476333.1"/>
</dbReference>
<dbReference type="SMR" id="B8PL20"/>
<dbReference type="FunCoup" id="B8PL20">
    <property type="interactions" value="52"/>
</dbReference>
<dbReference type="STRING" id="561896.B8PL20"/>
<dbReference type="KEGG" id="ppl:POSPLDRAFT_104426"/>
<dbReference type="HOGENOM" id="CLU_032730_0_0_1"/>
<dbReference type="InParanoid" id="B8PL20"/>
<dbReference type="OMA" id="WSFTQGL"/>
<dbReference type="OrthoDB" id="5599157at2759"/>
<dbReference type="GO" id="GO:0005789">
    <property type="term" value="C:endoplasmic reticulum membrane"/>
    <property type="evidence" value="ECO:0007669"/>
    <property type="project" value="UniProtKB-SubCell"/>
</dbReference>
<dbReference type="GO" id="GO:0032865">
    <property type="term" value="C:ERMES complex"/>
    <property type="evidence" value="ECO:0007669"/>
    <property type="project" value="UniProtKB-UniRule"/>
</dbReference>
<dbReference type="GO" id="GO:0008289">
    <property type="term" value="F:lipid binding"/>
    <property type="evidence" value="ECO:0007669"/>
    <property type="project" value="UniProtKB-KW"/>
</dbReference>
<dbReference type="GO" id="GO:0000002">
    <property type="term" value="P:mitochondrial genome maintenance"/>
    <property type="evidence" value="ECO:0007669"/>
    <property type="project" value="UniProtKB-UniRule"/>
</dbReference>
<dbReference type="GO" id="GO:1990456">
    <property type="term" value="P:mitochondrion-endoplasmic reticulum membrane tethering"/>
    <property type="evidence" value="ECO:0007669"/>
    <property type="project" value="TreeGrafter"/>
</dbReference>
<dbReference type="GO" id="GO:0015914">
    <property type="term" value="P:phospholipid transport"/>
    <property type="evidence" value="ECO:0007669"/>
    <property type="project" value="TreeGrafter"/>
</dbReference>
<dbReference type="GO" id="GO:0045040">
    <property type="term" value="P:protein insertion into mitochondrial outer membrane"/>
    <property type="evidence" value="ECO:0007669"/>
    <property type="project" value="UniProtKB-UniRule"/>
</dbReference>
<dbReference type="CDD" id="cd21671">
    <property type="entry name" value="SMP_Mmm1"/>
    <property type="match status" value="1"/>
</dbReference>
<dbReference type="HAMAP" id="MF_03103">
    <property type="entry name" value="Mmm1"/>
    <property type="match status" value="1"/>
</dbReference>
<dbReference type="InterPro" id="IPR027537">
    <property type="entry name" value="Mmm1"/>
</dbReference>
<dbReference type="InterPro" id="IPR019411">
    <property type="entry name" value="MMM1_dom"/>
</dbReference>
<dbReference type="InterPro" id="IPR031468">
    <property type="entry name" value="SMP_LBD"/>
</dbReference>
<dbReference type="PANTHER" id="PTHR13466:SF0">
    <property type="entry name" value="SMP-LTD DOMAIN-CONTAINING PROTEIN"/>
    <property type="match status" value="1"/>
</dbReference>
<dbReference type="PANTHER" id="PTHR13466">
    <property type="entry name" value="TEX2 PROTEIN-RELATED"/>
    <property type="match status" value="1"/>
</dbReference>
<dbReference type="Pfam" id="PF10296">
    <property type="entry name" value="MMM1"/>
    <property type="match status" value="1"/>
</dbReference>
<dbReference type="PROSITE" id="PS51847">
    <property type="entry name" value="SMP"/>
    <property type="match status" value="1"/>
</dbReference>
<keyword id="KW-0256">Endoplasmic reticulum</keyword>
<keyword id="KW-0445">Lipid transport</keyword>
<keyword id="KW-0446">Lipid-binding</keyword>
<keyword id="KW-0472">Membrane</keyword>
<keyword id="KW-0812">Transmembrane</keyword>
<keyword id="KW-1133">Transmembrane helix</keyword>
<keyword id="KW-0813">Transport</keyword>
<proteinExistence type="inferred from homology"/>
<evidence type="ECO:0000255" key="1">
    <source>
        <dbReference type="HAMAP-Rule" id="MF_03103"/>
    </source>
</evidence>
<name>MMM1_POSPM</name>
<reference key="1">
    <citation type="journal article" date="2009" name="Proc. Natl. Acad. Sci. U.S.A.">
        <title>Genome, transcriptome, and secretome analysis of wood decay fungus Postia placenta supports unique mechanisms of lignocellulose conversion.</title>
        <authorList>
            <person name="Martinez D."/>
            <person name="Challacombe J."/>
            <person name="Morgenstern I."/>
            <person name="Hibbett D."/>
            <person name="Schmoll M."/>
            <person name="Kubicek C.P."/>
            <person name="Ferreira P."/>
            <person name="Ruiz-Duenas F.J."/>
            <person name="Martinez A.T."/>
            <person name="Kersten P."/>
            <person name="Hammel K.E."/>
            <person name="Vanden Wymelenberg A."/>
            <person name="Gaskell J."/>
            <person name="Lindquist E."/>
            <person name="Sabat G."/>
            <person name="Splinter BonDurant S."/>
            <person name="Larrondo L.F."/>
            <person name="Canessa P."/>
            <person name="Vicuna R."/>
            <person name="Yadav J."/>
            <person name="Doddapaneni H."/>
            <person name="Subramanian V."/>
            <person name="Pisabarro A.G."/>
            <person name="Lavin J.L."/>
            <person name="Oguiza J.A."/>
            <person name="Master E."/>
            <person name="Henrissat B."/>
            <person name="Coutinho P.M."/>
            <person name="Harris P."/>
            <person name="Magnuson J.K."/>
            <person name="Baker S.E."/>
            <person name="Bruno K."/>
            <person name="Kenealy W."/>
            <person name="Hoegger P.J."/>
            <person name="Kuees U."/>
            <person name="Ramaiya P."/>
            <person name="Lucas S."/>
            <person name="Salamov A."/>
            <person name="Shapiro H."/>
            <person name="Tu H."/>
            <person name="Chee C.L."/>
            <person name="Misra M."/>
            <person name="Xie G."/>
            <person name="Teter S."/>
            <person name="Yaver D."/>
            <person name="James T."/>
            <person name="Mokrejs M."/>
            <person name="Pospisek M."/>
            <person name="Grigoriev I.V."/>
            <person name="Brettin T."/>
            <person name="Rokhsar D."/>
            <person name="Berka R."/>
            <person name="Cullen D."/>
        </authorList>
    </citation>
    <scope>NUCLEOTIDE SEQUENCE [LARGE SCALE GENOMIC DNA]</scope>
    <source>
        <strain>ATCC 44394 / Madison 698-R</strain>
    </source>
</reference>
<protein>
    <recommendedName>
        <fullName evidence="1">Maintenance of mitochondrial morphology protein 1</fullName>
    </recommendedName>
</protein>
<accession>B8PL20</accession>
<gene>
    <name evidence="1" type="primary">MMM1</name>
    <name type="ORF">POSPLDRAFT_104426</name>
</gene>
<organism>
    <name type="scientific">Postia placenta (strain ATCC 44394 / Madison 698-R)</name>
    <name type="common">Brown rot fungus</name>
    <name type="synonym">Poria monticola</name>
    <dbReference type="NCBI Taxonomy" id="561896"/>
    <lineage>
        <taxon>Eukaryota</taxon>
        <taxon>Fungi</taxon>
        <taxon>Dikarya</taxon>
        <taxon>Basidiomycota</taxon>
        <taxon>Agaricomycotina</taxon>
        <taxon>Agaricomycetes</taxon>
        <taxon>Polyporales</taxon>
        <taxon>Adustoporiaceae</taxon>
        <taxon>Rhodonia</taxon>
    </lineage>
</organism>